<dbReference type="EMBL" id="CR858064">
    <property type="protein sequence ID" value="CAH90303.1"/>
    <property type="molecule type" value="mRNA"/>
</dbReference>
<dbReference type="EMBL" id="CR861278">
    <property type="protein sequence ID" value="CAH93346.1"/>
    <property type="molecule type" value="mRNA"/>
</dbReference>
<dbReference type="RefSeq" id="NP_001125141.1">
    <property type="nucleotide sequence ID" value="NM_001131669.1"/>
</dbReference>
<dbReference type="SMR" id="Q5R4H0"/>
<dbReference type="FunCoup" id="Q5R4H0">
    <property type="interactions" value="2002"/>
</dbReference>
<dbReference type="STRING" id="9601.ENSPPYP00000016418"/>
<dbReference type="GeneID" id="100172026"/>
<dbReference type="KEGG" id="pon:100172026"/>
<dbReference type="CTD" id="10463"/>
<dbReference type="eggNOG" id="KOG2802">
    <property type="taxonomic scope" value="Eukaryota"/>
</dbReference>
<dbReference type="InParanoid" id="Q5R4H0"/>
<dbReference type="OrthoDB" id="435980at2759"/>
<dbReference type="Proteomes" id="UP000001595">
    <property type="component" value="Unplaced"/>
</dbReference>
<dbReference type="GO" id="GO:0031410">
    <property type="term" value="C:cytoplasmic vesicle"/>
    <property type="evidence" value="ECO:0000250"/>
    <property type="project" value="UniProtKB"/>
</dbReference>
<dbReference type="GO" id="GO:0005783">
    <property type="term" value="C:endoplasmic reticulum"/>
    <property type="evidence" value="ECO:0000250"/>
    <property type="project" value="UniProtKB"/>
</dbReference>
<dbReference type="GO" id="GO:0031966">
    <property type="term" value="C:mitochondrial membrane"/>
    <property type="evidence" value="ECO:0000250"/>
    <property type="project" value="UniProtKB"/>
</dbReference>
<dbReference type="GO" id="GO:0005634">
    <property type="term" value="C:nucleus"/>
    <property type="evidence" value="ECO:0007669"/>
    <property type="project" value="UniProtKB-SubCell"/>
</dbReference>
<dbReference type="GO" id="GO:0015297">
    <property type="term" value="F:antiporter activity"/>
    <property type="evidence" value="ECO:0007669"/>
    <property type="project" value="UniProtKB-KW"/>
</dbReference>
<dbReference type="GO" id="GO:0005385">
    <property type="term" value="F:zinc ion transmembrane transporter activity"/>
    <property type="evidence" value="ECO:0000250"/>
    <property type="project" value="UniProtKB"/>
</dbReference>
<dbReference type="GO" id="GO:0006882">
    <property type="term" value="P:intracellular zinc ion homeostasis"/>
    <property type="evidence" value="ECO:0000250"/>
    <property type="project" value="UniProtKB"/>
</dbReference>
<dbReference type="GO" id="GO:0010821">
    <property type="term" value="P:regulation of mitochondrion organization"/>
    <property type="evidence" value="ECO:0000250"/>
    <property type="project" value="UniProtKB"/>
</dbReference>
<dbReference type="GO" id="GO:0006829">
    <property type="term" value="P:zinc ion transport"/>
    <property type="evidence" value="ECO:0000250"/>
    <property type="project" value="UniProtKB"/>
</dbReference>
<dbReference type="CDD" id="cd21078">
    <property type="entry name" value="NTD_ZNT9"/>
    <property type="match status" value="1"/>
</dbReference>
<dbReference type="FunFam" id="1.20.1510.10:FF:000004">
    <property type="entry name" value="zinc transporter 9 isoform X1"/>
    <property type="match status" value="1"/>
</dbReference>
<dbReference type="FunFam" id="3.90.530.10:FF:000002">
    <property type="entry name" value="zinc transporter 9 isoform X1"/>
    <property type="match status" value="1"/>
</dbReference>
<dbReference type="Gene3D" id="1.20.1510.10">
    <property type="entry name" value="Cation efflux protein transmembrane domain"/>
    <property type="match status" value="1"/>
</dbReference>
<dbReference type="Gene3D" id="3.90.530.10">
    <property type="entry name" value="XPA C-terminal domain"/>
    <property type="match status" value="1"/>
</dbReference>
<dbReference type="InterPro" id="IPR002524">
    <property type="entry name" value="Cation_efflux"/>
</dbReference>
<dbReference type="InterPro" id="IPR027469">
    <property type="entry name" value="Cation_efflux_TMD_sf"/>
</dbReference>
<dbReference type="InterPro" id="IPR009061">
    <property type="entry name" value="DNA-bd_dom_put_sf"/>
</dbReference>
<dbReference type="InterPro" id="IPR040177">
    <property type="entry name" value="SLC30A9"/>
</dbReference>
<dbReference type="InterPro" id="IPR037129">
    <property type="entry name" value="XPA_sf"/>
</dbReference>
<dbReference type="NCBIfam" id="TIGR01297">
    <property type="entry name" value="CDF"/>
    <property type="match status" value="1"/>
</dbReference>
<dbReference type="PANTHER" id="PTHR13414">
    <property type="entry name" value="HUEL-CATION TRANSPORTER"/>
    <property type="match status" value="1"/>
</dbReference>
<dbReference type="PANTHER" id="PTHR13414:SF9">
    <property type="entry name" value="PROTON-COUPLED ZINC ANTIPORTER SLC30A9, MITOCHONDRIAL"/>
    <property type="match status" value="1"/>
</dbReference>
<dbReference type="Pfam" id="PF01545">
    <property type="entry name" value="Cation_efflux"/>
    <property type="match status" value="1"/>
</dbReference>
<dbReference type="SUPFAM" id="SSF161111">
    <property type="entry name" value="Cation efflux protein transmembrane domain-like"/>
    <property type="match status" value="1"/>
</dbReference>
<dbReference type="SUPFAM" id="SSF46955">
    <property type="entry name" value="Putative DNA-binding domain"/>
    <property type="match status" value="1"/>
</dbReference>
<organism>
    <name type="scientific">Pongo abelii</name>
    <name type="common">Sumatran orangutan</name>
    <name type="synonym">Pongo pygmaeus abelii</name>
    <dbReference type="NCBI Taxonomy" id="9601"/>
    <lineage>
        <taxon>Eukaryota</taxon>
        <taxon>Metazoa</taxon>
        <taxon>Chordata</taxon>
        <taxon>Craniata</taxon>
        <taxon>Vertebrata</taxon>
        <taxon>Euteleostomi</taxon>
        <taxon>Mammalia</taxon>
        <taxon>Eutheria</taxon>
        <taxon>Euarchontoglires</taxon>
        <taxon>Primates</taxon>
        <taxon>Haplorrhini</taxon>
        <taxon>Catarrhini</taxon>
        <taxon>Hominidae</taxon>
        <taxon>Pongo</taxon>
    </lineage>
</organism>
<proteinExistence type="evidence at transcript level"/>
<comment type="function">
    <text evidence="1 2">Mitochondrial proton-coupled zinc ion antiporter mediating the export of zinc from the mitochondria and involved in zinc homeostasis, zinc mobilization as well as mitochondrial morphology and health (By similarity). In nucleus, functions as a secondary coactivator for nuclear receptors by cooperating with p160 coactivators subtypes. Plays a role in transcriptional activation of Wnt-responsive genes (By similarity).</text>
</comment>
<comment type="catalytic activity">
    <reaction evidence="2">
        <text>Zn(2+)(in) + 2 H(+)(out) = Zn(2+)(out) + 2 H(+)(in)</text>
        <dbReference type="Rhea" id="RHEA:72627"/>
        <dbReference type="ChEBI" id="CHEBI:15378"/>
        <dbReference type="ChEBI" id="CHEBI:29105"/>
    </reaction>
</comment>
<comment type="subunit">
    <text evidence="1">Interacts with GRIP1, ESR1, AR and CTNNB1.</text>
</comment>
<comment type="subcellular location">
    <subcellularLocation>
        <location evidence="2">Mitochondrion membrane</location>
        <topology evidence="2">Multi-pass membrane protein</topology>
    </subcellularLocation>
    <subcellularLocation>
        <location evidence="2">Nucleus</location>
    </subcellularLocation>
    <subcellularLocation>
        <location evidence="2">Endoplasmic reticulum</location>
    </subcellularLocation>
    <text evidence="2">Partial co-localization with endoplasmic reticulum. Linked to mitochondrial ribosomes.</text>
</comment>
<comment type="similarity">
    <text evidence="4">Belongs to the cation diffusion facilitator (CDF) transporter (TC 2.A.4) family. SLC30A subfamily.</text>
</comment>
<sequence>MLPGLAAAAAAHRCSWSSLCRLRPRCRAAACNPSDCQEWQNLVTFGSFSNMVPCSHPYIGTLSQVKLYSTDVQKEGQGSQTLRVEKVPSFETAEGIGAELKAPLKQEPLQVRVKAVLKKREYGSKYTQNNFITGVRAINEFCLKSSDLEQLRKIRRRSPHEDTESFTVYLRSDVEAKSLEVWGSPEALAREKKLRKEAEIEYRERLFRNQKILREYRDFLGNTKPRSRTASVFFKGPGKVVMVAICINGLNCFFKFLAWIYTGSASMFSEAIHSLSDTCNQGLLALGISKSVQTPDPSHPYGFSNMRYISSLISGVGIFMMGAGLSWYHGVMGLLHPQPIESLLWAYCILAGSLVSEGATLLVAVNELRRNARAKGMSFYKYVMESRDPSTNVILLEDTAAVLGVIIAATCMGLTSITGNPLYDSLGSLGVGTLLGMVSAFLIYTNTEALLGRSIQPEQVQRLTELLENDPSVRAIHDVKATDLGLGKVRFKAEVDFDGRVVTRSYLEKQDFDQMLQEIQEVKTPEELETFMLKHGENIIDTLGAEVDRLEKELKKRNPEVRHVDLEIL</sequence>
<name>ZNT9_PONAB</name>
<feature type="transit peptide" description="Mitochondrion" evidence="3">
    <location>
        <begin position="1"/>
        <end position="68"/>
    </location>
</feature>
<feature type="chain" id="PRO_0000295807" description="Proton-coupled zinc antiporter SLC30A9, mitochondrial">
    <location>
        <begin position="69"/>
        <end position="569"/>
    </location>
</feature>
<feature type="transmembrane region" description="Helical" evidence="3">
    <location>
        <begin position="240"/>
        <end position="260"/>
    </location>
</feature>
<feature type="transmembrane region" description="Helical" evidence="3">
    <location>
        <begin position="315"/>
        <end position="335"/>
    </location>
</feature>
<feature type="transmembrane region" description="Helical" evidence="3">
    <location>
        <begin position="343"/>
        <end position="363"/>
    </location>
</feature>
<feature type="transmembrane region" description="Helical" evidence="3">
    <location>
        <begin position="393"/>
        <end position="413"/>
    </location>
</feature>
<feature type="transmembrane region" description="Helical" evidence="3">
    <location>
        <begin position="425"/>
        <end position="445"/>
    </location>
</feature>
<feature type="short sequence motif" description="LXXLL motif" evidence="2">
    <location>
        <begin position="463"/>
        <end position="467"/>
    </location>
</feature>
<feature type="sequence conflict" description="In Ref. 1; CAH90303." evidence="4" ref="1">
    <original>P</original>
    <variation>L</variation>
    <location>
        <position position="24"/>
    </location>
</feature>
<feature type="sequence conflict" description="In Ref. 1; CAH90303." evidence="4" ref="1">
    <original>E</original>
    <variation>G</variation>
    <location>
        <position position="199"/>
    </location>
</feature>
<feature type="sequence conflict" description="In Ref. 1; CAH90303." evidence="4" ref="1">
    <original>L</original>
    <variation>H</variation>
    <location>
        <position position="343"/>
    </location>
</feature>
<gene>
    <name type="primary">SLC30A9</name>
</gene>
<accession>Q5R4H0</accession>
<accession>Q5RD54</accession>
<keyword id="KW-0050">Antiport</keyword>
<keyword id="KW-0256">Endoplasmic reticulum</keyword>
<keyword id="KW-0406">Ion transport</keyword>
<keyword id="KW-0472">Membrane</keyword>
<keyword id="KW-0496">Mitochondrion</keyword>
<keyword id="KW-0539">Nucleus</keyword>
<keyword id="KW-1185">Reference proteome</keyword>
<keyword id="KW-0804">Transcription</keyword>
<keyword id="KW-0805">Transcription regulation</keyword>
<keyword id="KW-0809">Transit peptide</keyword>
<keyword id="KW-0812">Transmembrane</keyword>
<keyword id="KW-1133">Transmembrane helix</keyword>
<keyword id="KW-0813">Transport</keyword>
<keyword id="KW-0862">Zinc</keyword>
<keyword id="KW-0864">Zinc transport</keyword>
<reference key="1">
    <citation type="submission" date="2004-11" db="EMBL/GenBank/DDBJ databases">
        <authorList>
            <consortium name="The German cDNA consortium"/>
        </authorList>
    </citation>
    <scope>NUCLEOTIDE SEQUENCE [LARGE SCALE MRNA]</scope>
    <source>
        <tissue>Brain cortex</tissue>
    </source>
</reference>
<protein>
    <recommendedName>
        <fullName>Proton-coupled zinc antiporter SLC30A9, mitochondrial</fullName>
    </recommendedName>
    <alternativeName>
        <fullName>Solute carrier family 30 member 9</fullName>
    </alternativeName>
    <alternativeName>
        <fullName>Zinc transporter 9</fullName>
        <shortName>ZnT-9</shortName>
    </alternativeName>
</protein>
<evidence type="ECO:0000250" key="1">
    <source>
        <dbReference type="UniProtKB" id="Q5IRJ6"/>
    </source>
</evidence>
<evidence type="ECO:0000250" key="2">
    <source>
        <dbReference type="UniProtKB" id="Q6PML9"/>
    </source>
</evidence>
<evidence type="ECO:0000255" key="3"/>
<evidence type="ECO:0000305" key="4"/>